<gene>
    <name evidence="1" type="primary">VAPA</name>
</gene>
<accession>Q0VCY1</accession>
<protein>
    <recommendedName>
        <fullName evidence="1">Vesicle-associated membrane protein-associated protein A</fullName>
        <shortName>VAMP-A</shortName>
        <shortName>VAMP-associated protein A</shortName>
        <shortName>VAP-A</shortName>
    </recommendedName>
</protein>
<name>VAPA_BOVIN</name>
<feature type="initiator methionine" description="Removed" evidence="1">
    <location>
        <position position="1"/>
    </location>
</feature>
<feature type="chain" id="PRO_0000271378" description="Vesicle-associated membrane protein-associated protein A">
    <location>
        <begin position="2"/>
        <end position="249"/>
    </location>
</feature>
<feature type="topological domain" description="Cytoplasmic" evidence="2">
    <location>
        <begin position="2"/>
        <end position="227"/>
    </location>
</feature>
<feature type="transmembrane region" description="Helical; Anchor for type IV membrane protein" evidence="2">
    <location>
        <begin position="228"/>
        <end position="248"/>
    </location>
</feature>
<feature type="domain" description="MSP" evidence="3">
    <location>
        <begin position="14"/>
        <end position="131"/>
    </location>
</feature>
<feature type="region of interest" description="phosphorylated FFAT motif binding" evidence="1">
    <location>
        <begin position="50"/>
        <end position="53"/>
    </location>
</feature>
<feature type="coiled-coil region" evidence="2">
    <location>
        <begin position="169"/>
        <end position="205"/>
    </location>
</feature>
<feature type="site" description="Involved in binding the phosphorylated serine of the phospho-FFAT motif" evidence="1">
    <location>
        <position position="50"/>
    </location>
</feature>
<feature type="modified residue" description="N-acetylalanine" evidence="1">
    <location>
        <position position="2"/>
    </location>
</feature>
<feature type="modified residue" description="N6-acetyllysine" evidence="1">
    <location>
        <position position="125"/>
    </location>
</feature>
<feature type="modified residue" description="Phosphoserine" evidence="1">
    <location>
        <position position="166"/>
    </location>
</feature>
<feature type="modified residue" description="Phosphothreonine" evidence="1">
    <location>
        <position position="170"/>
    </location>
</feature>
<feature type="modified residue" description="Phosphoserine" evidence="1">
    <location>
        <position position="214"/>
    </location>
</feature>
<feature type="modified residue" description="Phosphoserine" evidence="1">
    <location>
        <position position="216"/>
    </location>
</feature>
<feature type="modified residue" description="Phosphoserine" evidence="1">
    <location>
        <position position="219"/>
    </location>
</feature>
<feature type="disulfide bond" description="Interchain" evidence="1">
    <location>
        <position position="60"/>
    </location>
</feature>
<comment type="function">
    <text evidence="1">Endoplasmic reticulum (ER)-anchored protein that mediates the formation of contact sites between the ER and endosomes via interaction with FFAT motif-containing proteins such as STARD3 or WDR44. STARD3-VAPA interaction enables cholesterol transfer from the ER to endosomes. Via interaction with WDR44 participates in neosynthesized protein export. In addition, recruited to the plasma membrane through OSBPL3 binding. The OSBPL3-VAPA complex stimulates RRAS signaling which in turn attenuates integrin beta-1 (ITGB1) activation at the cell surface. With OSBPL3, may regulate ER morphology. May play a role in vesicle trafficking.</text>
</comment>
<comment type="subunit">
    <text evidence="1">Homodimer; disulfide-linked. Heterodimer with VAPB. Interacts with VAMP1, VAMP2, STX1A, BET1, SEC22C and with the C-terminal domain of OCLN. Interacts (via MSP domain) with OSBPL1A (via FFAT motif). Interacts (via MSP domain) with ZFYVE27; may retain ZFYVE27 in the endoplasmic reticulum and regulate its function in cell projections formation. Interacts with OSBP. Interacts (via C-terminus) with RSAD2/viperin (via C-terminus). Interacts with IFITM3. Interacts with OSBPL3 (phosphorylated form). Interacts with KIF5A in a ZFYVE27-dependent manner. Interacts (via MSP domain) with STARD3 (via phosphorylated FFAT motif); this interaction recruits VAPA to the endosome. Interacts with STARD3NL (via FFAT motif). Interacts with CERT1. Interacts with PLEKHA3 and SACM1L to form a ternary complex. Interacts with VPS13A (via FFAT motif). Interacts with RB1CC1 (via phosphorylated FFAT motif), MIGA2 (via phosphorylated FFAT motif), RMDN3 (via phosphorylated FFAT motif), KCNB1 (via phosphorylated FFAT motif) and KCNB2 (via phosphorylated FFAT motif). Interacts (via MSP domain) with WDR44 (via FFAT-like motif); the interactions connect the endoplasmic reticulum (ER) with the endosomal tubule (By similarity).</text>
</comment>
<comment type="subcellular location">
    <subcellularLocation>
        <location evidence="1">Endoplasmic reticulum membrane</location>
        <topology evidence="1">Single-pass type IV membrane protein</topology>
    </subcellularLocation>
    <subcellularLocation>
        <location evidence="1">Cell junction</location>
        <location evidence="1">Tight junction</location>
    </subcellularLocation>
    <subcellularLocation>
        <location evidence="1">Cell membrane</location>
        <topology evidence="4">Single-pass type IV membrane protein</topology>
    </subcellularLocation>
    <text evidence="1">Present in the plasma membrane and in intracellular vesicles, together with SNARE proteins. May also associate with the cytoskeleton. Colocalizes with OCLN at the tight junction in polarized epithelial cells.</text>
</comment>
<comment type="domain">
    <text evidence="1">The MSP domain binds the FFAT motif of many proteins.</text>
</comment>
<comment type="similarity">
    <text evidence="4">Belongs to the VAMP-associated protein (VAP) (TC 9.B.17) family.</text>
</comment>
<proteinExistence type="evidence at transcript level"/>
<dbReference type="EMBL" id="BC119937">
    <property type="protein sequence ID" value="AAI19938.1"/>
    <property type="molecule type" value="mRNA"/>
</dbReference>
<dbReference type="RefSeq" id="NP_001069201.1">
    <property type="nucleotide sequence ID" value="NM_001075733.1"/>
</dbReference>
<dbReference type="SMR" id="Q0VCY1"/>
<dbReference type="FunCoup" id="Q0VCY1">
    <property type="interactions" value="3482"/>
</dbReference>
<dbReference type="STRING" id="9913.ENSBTAP00000064278"/>
<dbReference type="PaxDb" id="9913-ENSBTAP00000022970"/>
<dbReference type="PeptideAtlas" id="Q0VCY1"/>
<dbReference type="Ensembl" id="ENSBTAT00000022970.5">
    <property type="protein sequence ID" value="ENSBTAP00000022970.3"/>
    <property type="gene ID" value="ENSBTAG00000017279.6"/>
</dbReference>
<dbReference type="GeneID" id="516024"/>
<dbReference type="KEGG" id="bta:516024"/>
<dbReference type="CTD" id="9218"/>
<dbReference type="VEuPathDB" id="HostDB:ENSBTAG00000017279"/>
<dbReference type="VGNC" id="VGNC:36763">
    <property type="gene designation" value="VAPA"/>
</dbReference>
<dbReference type="eggNOG" id="KOG0439">
    <property type="taxonomic scope" value="Eukaryota"/>
</dbReference>
<dbReference type="GeneTree" id="ENSGT00940000154799"/>
<dbReference type="HOGENOM" id="CLU_032848_0_1_1"/>
<dbReference type="InParanoid" id="Q0VCY1"/>
<dbReference type="OMA" id="QKIDMME"/>
<dbReference type="OrthoDB" id="264603at2759"/>
<dbReference type="TreeFam" id="TF317024"/>
<dbReference type="Reactome" id="R-BTA-1660661">
    <property type="pathway name" value="Sphingolipid de novo biosynthesis"/>
</dbReference>
<dbReference type="Reactome" id="R-BTA-6798695">
    <property type="pathway name" value="Neutrophil degranulation"/>
</dbReference>
<dbReference type="Reactome" id="R-BTA-9609523">
    <property type="pathway name" value="Insertion of tail-anchored proteins into the endoplasmic reticulum membrane"/>
</dbReference>
<dbReference type="Proteomes" id="UP000009136">
    <property type="component" value="Chromosome 24"/>
</dbReference>
<dbReference type="Bgee" id="ENSBTAG00000017279">
    <property type="expression patterns" value="Expressed in longissimus thoracis muscle and 105 other cell types or tissues"/>
</dbReference>
<dbReference type="GO" id="GO:0005923">
    <property type="term" value="C:bicellular tight junction"/>
    <property type="evidence" value="ECO:0007669"/>
    <property type="project" value="UniProtKB-SubCell"/>
</dbReference>
<dbReference type="GO" id="GO:0005783">
    <property type="term" value="C:endoplasmic reticulum"/>
    <property type="evidence" value="ECO:0000250"/>
    <property type="project" value="UniProtKB"/>
</dbReference>
<dbReference type="GO" id="GO:0005789">
    <property type="term" value="C:endoplasmic reticulum membrane"/>
    <property type="evidence" value="ECO:0000250"/>
    <property type="project" value="UniProtKB"/>
</dbReference>
<dbReference type="GO" id="GO:0005886">
    <property type="term" value="C:plasma membrane"/>
    <property type="evidence" value="ECO:0000318"/>
    <property type="project" value="GO_Central"/>
</dbReference>
<dbReference type="GO" id="GO:0043495">
    <property type="term" value="F:protein-membrane adaptor activity"/>
    <property type="evidence" value="ECO:0000318"/>
    <property type="project" value="GO_Central"/>
</dbReference>
<dbReference type="GO" id="GO:0031175">
    <property type="term" value="P:neuron projection development"/>
    <property type="evidence" value="ECO:0000250"/>
    <property type="project" value="UniProtKB"/>
</dbReference>
<dbReference type="GO" id="GO:0070972">
    <property type="term" value="P:protein localization to endoplasmic reticulum"/>
    <property type="evidence" value="ECO:0000250"/>
    <property type="project" value="UniProtKB"/>
</dbReference>
<dbReference type="FunFam" id="2.60.40.10:FF:000334">
    <property type="entry name" value="vesicle-associated membrane protein-associated protein A isoform X1"/>
    <property type="match status" value="1"/>
</dbReference>
<dbReference type="Gene3D" id="2.60.40.10">
    <property type="entry name" value="Immunoglobulins"/>
    <property type="match status" value="1"/>
</dbReference>
<dbReference type="InterPro" id="IPR013783">
    <property type="entry name" value="Ig-like_fold"/>
</dbReference>
<dbReference type="InterPro" id="IPR000535">
    <property type="entry name" value="MSP_dom"/>
</dbReference>
<dbReference type="InterPro" id="IPR008962">
    <property type="entry name" value="PapD-like_sf"/>
</dbReference>
<dbReference type="InterPro" id="IPR016763">
    <property type="entry name" value="VAP"/>
</dbReference>
<dbReference type="PANTHER" id="PTHR10809">
    <property type="entry name" value="VESICLE-ASSOCIATED MEMBRANE PROTEIN-ASSOCIATED PROTEIN"/>
    <property type="match status" value="1"/>
</dbReference>
<dbReference type="PANTHER" id="PTHR10809:SF155">
    <property type="entry name" value="VESICLE-ASSOCIATED MEMBRANE PROTEIN-ASSOCIATED PROTEIN A"/>
    <property type="match status" value="1"/>
</dbReference>
<dbReference type="Pfam" id="PF00635">
    <property type="entry name" value="Motile_Sperm"/>
    <property type="match status" value="1"/>
</dbReference>
<dbReference type="PIRSF" id="PIRSF019693">
    <property type="entry name" value="VAMP-associated"/>
    <property type="match status" value="1"/>
</dbReference>
<dbReference type="SUPFAM" id="SSF49354">
    <property type="entry name" value="PapD-like"/>
    <property type="match status" value="1"/>
</dbReference>
<dbReference type="PROSITE" id="PS50202">
    <property type="entry name" value="MSP"/>
    <property type="match status" value="1"/>
</dbReference>
<sequence length="249" mass="27856">MASASGTMAKHEQILVLDPPTDLKFKGPFTDVVTTNLKLRNPSDRKVCFKVKTTAPRRYCVRPNSGIIDPGLTVTVSVMLQPFDYDPNEKSKHKFMVQTIFAPPNISDMEAVWKEAKPDELMDSKLRCVFEMPNENDKLNDMEPSKAVPLNAAKQDGPVPKPHSVSLSDTETRKLVEECKRLQGEMMKLSEENRLLRDEGLRLRKVAHSEKPGSTSAVSFRENVTSPLPSLLVVIAAIFIGFFLGKFIL</sequence>
<reference evidence="4 5" key="1">
    <citation type="submission" date="2006-08" db="EMBL/GenBank/DDBJ databases">
        <authorList>
            <consortium name="NIH - Mammalian Gene Collection (MGC) project"/>
        </authorList>
    </citation>
    <scope>NUCLEOTIDE SEQUENCE [LARGE SCALE MRNA]</scope>
    <source>
        <strain evidence="5">Hereford</strain>
        <tissue evidence="5">Fetal muscle</tissue>
    </source>
</reference>
<evidence type="ECO:0000250" key="1">
    <source>
        <dbReference type="UniProtKB" id="Q9P0L0"/>
    </source>
</evidence>
<evidence type="ECO:0000255" key="2"/>
<evidence type="ECO:0000255" key="3">
    <source>
        <dbReference type="PROSITE-ProRule" id="PRU00132"/>
    </source>
</evidence>
<evidence type="ECO:0000305" key="4"/>
<evidence type="ECO:0000312" key="5">
    <source>
        <dbReference type="EMBL" id="AAI19938.1"/>
    </source>
</evidence>
<keyword id="KW-0007">Acetylation</keyword>
<keyword id="KW-0965">Cell junction</keyword>
<keyword id="KW-1003">Cell membrane</keyword>
<keyword id="KW-0175">Coiled coil</keyword>
<keyword id="KW-1015">Disulfide bond</keyword>
<keyword id="KW-0256">Endoplasmic reticulum</keyword>
<keyword id="KW-0472">Membrane</keyword>
<keyword id="KW-0597">Phosphoprotein</keyword>
<keyword id="KW-1185">Reference proteome</keyword>
<keyword id="KW-0796">Tight junction</keyword>
<keyword id="KW-0812">Transmembrane</keyword>
<keyword id="KW-1133">Transmembrane helix</keyword>
<organism>
    <name type="scientific">Bos taurus</name>
    <name type="common">Bovine</name>
    <dbReference type="NCBI Taxonomy" id="9913"/>
    <lineage>
        <taxon>Eukaryota</taxon>
        <taxon>Metazoa</taxon>
        <taxon>Chordata</taxon>
        <taxon>Craniata</taxon>
        <taxon>Vertebrata</taxon>
        <taxon>Euteleostomi</taxon>
        <taxon>Mammalia</taxon>
        <taxon>Eutheria</taxon>
        <taxon>Laurasiatheria</taxon>
        <taxon>Artiodactyla</taxon>
        <taxon>Ruminantia</taxon>
        <taxon>Pecora</taxon>
        <taxon>Bovidae</taxon>
        <taxon>Bovinae</taxon>
        <taxon>Bos</taxon>
    </lineage>
</organism>